<evidence type="ECO:0000255" key="1"/>
<evidence type="ECO:0000255" key="2">
    <source>
        <dbReference type="PROSITE-ProRule" id="PRU00224"/>
    </source>
</evidence>
<evidence type="ECO:0000255" key="3">
    <source>
        <dbReference type="PROSITE-ProRule" id="PRU00310"/>
    </source>
</evidence>
<evidence type="ECO:0000256" key="4">
    <source>
        <dbReference type="SAM" id="MobiDB-lite"/>
    </source>
</evidence>
<evidence type="ECO:0000269" key="5">
    <source>
    </source>
</evidence>
<evidence type="ECO:0000269" key="6">
    <source>
    </source>
</evidence>
<evidence type="ECO:0000269" key="7">
    <source>
    </source>
</evidence>
<evidence type="ECO:0000269" key="8">
    <source>
    </source>
</evidence>
<evidence type="ECO:0000269" key="9">
    <source>
    </source>
</evidence>
<evidence type="ECO:0000269" key="10">
    <source>
    </source>
</evidence>
<evidence type="ECO:0000269" key="11">
    <source>
    </source>
</evidence>
<evidence type="ECO:0000305" key="12"/>
<evidence type="ECO:0000312" key="13">
    <source>
        <dbReference type="EMBL" id="AAL39999.1"/>
    </source>
</evidence>
<evidence type="ECO:0000312" key="14">
    <source>
        <dbReference type="EMBL" id="AAM97280.1"/>
    </source>
</evidence>
<evidence type="ECO:0007829" key="15">
    <source>
        <dbReference type="PDB" id="6BN1"/>
    </source>
</evidence>
<gene>
    <name type="primary">sav</name>
    <name type="synonym">SHRP</name>
    <name type="ORF">CG33193</name>
</gene>
<sequence length="608" mass="68146">MNYLTILLCNRKPTMLSRRNKEKSQHKEGVVGKYMKKDTPPDISVINVWSDQRAKKKSLQRCASTSPSCEFHPRSSSTSRNTYSCTDSQPDYYHARRAQSQMPLQQHSHSHPHSLPHPSHPHVRSHPPLPPHQFRASSNQLSQNSSNYVNFEQIERMRRQQSSPLLQTTSSPAPGAGGFQRSYSTTQRQHHPHLGGDSYDADQGLLSASYANMLQLPQRPHSPAHYAVPPQQQQHPQIHQQHASTPFGSTLRFDRAAMSIRERQPRYQPTSSPMQQQQQQQQQQQQQLQHTQLAAHLGGSYSSDSYPIYENPSRVISMRATQSQRSESPIYSNTTASSATLAVVPQHHHQGHLAVPSGSGGGSLSGSGRGGSSGSVRGASTSVQSLYVPPRTPPSAVAGAGGSANGSLQKVPSQQSLTEPEELPLPPGWATQYTLHGRKYYIDHNAHTTHWNHPLEREGLPVGWRRVVSKMHGTYYENQYTGQSQRQHPCLTSYYVYTTSAEPPKAIRPEASLYAPPTHTHNALVPANPYLLEEIPKWLAVYSEADSSKDHLLQFNMFSLPELEGFDSMLVRLFKQELGTIVGFYERYRRALILEKNRRAGQNQNQNQ</sequence>
<proteinExistence type="evidence at protein level"/>
<accession>Q9VCR6</accession>
<accession>Q8MQH6</accession>
<accession>Q8T9A6</accession>
<accession>Q9VCR5</accession>
<keyword id="KW-0002">3D-structure</keyword>
<keyword id="KW-0053">Apoptosis</keyword>
<keyword id="KW-0175">Coiled coil</keyword>
<keyword id="KW-0597">Phosphoprotein</keyword>
<keyword id="KW-1185">Reference proteome</keyword>
<keyword id="KW-0677">Repeat</keyword>
<protein>
    <recommendedName>
        <fullName>Scaffold protein salvador</fullName>
    </recommendedName>
    <alternativeName>
        <fullName>Shar-pei</fullName>
    </alternativeName>
</protein>
<organism evidence="13">
    <name type="scientific">Drosophila melanogaster</name>
    <name type="common">Fruit fly</name>
    <dbReference type="NCBI Taxonomy" id="7227"/>
    <lineage>
        <taxon>Eukaryota</taxon>
        <taxon>Metazoa</taxon>
        <taxon>Ecdysozoa</taxon>
        <taxon>Arthropoda</taxon>
        <taxon>Hexapoda</taxon>
        <taxon>Insecta</taxon>
        <taxon>Pterygota</taxon>
        <taxon>Neoptera</taxon>
        <taxon>Endopterygota</taxon>
        <taxon>Diptera</taxon>
        <taxon>Brachycera</taxon>
        <taxon>Muscomorpha</taxon>
        <taxon>Ephydroidea</taxon>
        <taxon>Drosophilidae</taxon>
        <taxon>Drosophila</taxon>
        <taxon>Sophophora</taxon>
    </lineage>
</organism>
<reference evidence="14" key="1">
    <citation type="journal article" date="2002" name="Cell">
        <title>Salvador promotes both cell cycle exit and apoptosis in Drosophila and is mutated in human cancer cell lines.</title>
        <authorList>
            <person name="Tapon N."/>
            <person name="Harvey K.F."/>
            <person name="Bell D.W."/>
            <person name="Wahrer D.C.R."/>
            <person name="Schiripo T.A."/>
            <person name="Haber D.A."/>
            <person name="Hariharan I.K."/>
        </authorList>
    </citation>
    <scope>NUCLEOTIDE SEQUENCE [MRNA]</scope>
    <scope>FUNCTION</scope>
    <scope>TISSUE SPECIFICITY</scope>
    <scope>INTERACTION WITH WTS</scope>
</reference>
<reference evidence="12" key="2">
    <citation type="journal article" date="2000" name="Science">
        <title>The genome sequence of Drosophila melanogaster.</title>
        <authorList>
            <person name="Adams M.D."/>
            <person name="Celniker S.E."/>
            <person name="Holt R.A."/>
            <person name="Evans C.A."/>
            <person name="Gocayne J.D."/>
            <person name="Amanatides P.G."/>
            <person name="Scherer S.E."/>
            <person name="Li P.W."/>
            <person name="Hoskins R.A."/>
            <person name="Galle R.F."/>
            <person name="George R.A."/>
            <person name="Lewis S.E."/>
            <person name="Richards S."/>
            <person name="Ashburner M."/>
            <person name="Henderson S.N."/>
            <person name="Sutton G.G."/>
            <person name="Wortman J.R."/>
            <person name="Yandell M.D."/>
            <person name="Zhang Q."/>
            <person name="Chen L.X."/>
            <person name="Brandon R.C."/>
            <person name="Rogers Y.-H.C."/>
            <person name="Blazej R.G."/>
            <person name="Champe M."/>
            <person name="Pfeiffer B.D."/>
            <person name="Wan K.H."/>
            <person name="Doyle C."/>
            <person name="Baxter E.G."/>
            <person name="Helt G."/>
            <person name="Nelson C.R."/>
            <person name="Miklos G.L.G."/>
            <person name="Abril J.F."/>
            <person name="Agbayani A."/>
            <person name="An H.-J."/>
            <person name="Andrews-Pfannkoch C."/>
            <person name="Baldwin D."/>
            <person name="Ballew R.M."/>
            <person name="Basu A."/>
            <person name="Baxendale J."/>
            <person name="Bayraktaroglu L."/>
            <person name="Beasley E.M."/>
            <person name="Beeson K.Y."/>
            <person name="Benos P.V."/>
            <person name="Berman B.P."/>
            <person name="Bhandari D."/>
            <person name="Bolshakov S."/>
            <person name="Borkova D."/>
            <person name="Botchan M.R."/>
            <person name="Bouck J."/>
            <person name="Brokstein P."/>
            <person name="Brottier P."/>
            <person name="Burtis K.C."/>
            <person name="Busam D.A."/>
            <person name="Butler H."/>
            <person name="Cadieu E."/>
            <person name="Center A."/>
            <person name="Chandra I."/>
            <person name="Cherry J.M."/>
            <person name="Cawley S."/>
            <person name="Dahlke C."/>
            <person name="Davenport L.B."/>
            <person name="Davies P."/>
            <person name="de Pablos B."/>
            <person name="Delcher A."/>
            <person name="Deng Z."/>
            <person name="Mays A.D."/>
            <person name="Dew I."/>
            <person name="Dietz S.M."/>
            <person name="Dodson K."/>
            <person name="Doup L.E."/>
            <person name="Downes M."/>
            <person name="Dugan-Rocha S."/>
            <person name="Dunkov B.C."/>
            <person name="Dunn P."/>
            <person name="Durbin K.J."/>
            <person name="Evangelista C.C."/>
            <person name="Ferraz C."/>
            <person name="Ferriera S."/>
            <person name="Fleischmann W."/>
            <person name="Fosler C."/>
            <person name="Gabrielian A.E."/>
            <person name="Garg N.S."/>
            <person name="Gelbart W.M."/>
            <person name="Glasser K."/>
            <person name="Glodek A."/>
            <person name="Gong F."/>
            <person name="Gorrell J.H."/>
            <person name="Gu Z."/>
            <person name="Guan P."/>
            <person name="Harris M."/>
            <person name="Harris N.L."/>
            <person name="Harvey D.A."/>
            <person name="Heiman T.J."/>
            <person name="Hernandez J.R."/>
            <person name="Houck J."/>
            <person name="Hostin D."/>
            <person name="Houston K.A."/>
            <person name="Howland T.J."/>
            <person name="Wei M.-H."/>
            <person name="Ibegwam C."/>
            <person name="Jalali M."/>
            <person name="Kalush F."/>
            <person name="Karpen G.H."/>
            <person name="Ke Z."/>
            <person name="Kennison J.A."/>
            <person name="Ketchum K.A."/>
            <person name="Kimmel B.E."/>
            <person name="Kodira C.D."/>
            <person name="Kraft C.L."/>
            <person name="Kravitz S."/>
            <person name="Kulp D."/>
            <person name="Lai Z."/>
            <person name="Lasko P."/>
            <person name="Lei Y."/>
            <person name="Levitsky A.A."/>
            <person name="Li J.H."/>
            <person name="Li Z."/>
            <person name="Liang Y."/>
            <person name="Lin X."/>
            <person name="Liu X."/>
            <person name="Mattei B."/>
            <person name="McIntosh T.C."/>
            <person name="McLeod M.P."/>
            <person name="McPherson D."/>
            <person name="Merkulov G."/>
            <person name="Milshina N.V."/>
            <person name="Mobarry C."/>
            <person name="Morris J."/>
            <person name="Moshrefi A."/>
            <person name="Mount S.M."/>
            <person name="Moy M."/>
            <person name="Murphy B."/>
            <person name="Murphy L."/>
            <person name="Muzny D.M."/>
            <person name="Nelson D.L."/>
            <person name="Nelson D.R."/>
            <person name="Nelson K.A."/>
            <person name="Nixon K."/>
            <person name="Nusskern D.R."/>
            <person name="Pacleb J.M."/>
            <person name="Palazzolo M."/>
            <person name="Pittman G.S."/>
            <person name="Pan S."/>
            <person name="Pollard J."/>
            <person name="Puri V."/>
            <person name="Reese M.G."/>
            <person name="Reinert K."/>
            <person name="Remington K."/>
            <person name="Saunders R.D.C."/>
            <person name="Scheeler F."/>
            <person name="Shen H."/>
            <person name="Shue B.C."/>
            <person name="Siden-Kiamos I."/>
            <person name="Simpson M."/>
            <person name="Skupski M.P."/>
            <person name="Smith T.J."/>
            <person name="Spier E."/>
            <person name="Spradling A.C."/>
            <person name="Stapleton M."/>
            <person name="Strong R."/>
            <person name="Sun E."/>
            <person name="Svirskas R."/>
            <person name="Tector C."/>
            <person name="Turner R."/>
            <person name="Venter E."/>
            <person name="Wang A.H."/>
            <person name="Wang X."/>
            <person name="Wang Z.-Y."/>
            <person name="Wassarman D.A."/>
            <person name="Weinstock G.M."/>
            <person name="Weissenbach J."/>
            <person name="Williams S.M."/>
            <person name="Woodage T."/>
            <person name="Worley K.C."/>
            <person name="Wu D."/>
            <person name="Yang S."/>
            <person name="Yao Q.A."/>
            <person name="Ye J."/>
            <person name="Yeh R.-F."/>
            <person name="Zaveri J.S."/>
            <person name="Zhan M."/>
            <person name="Zhang G."/>
            <person name="Zhao Q."/>
            <person name="Zheng L."/>
            <person name="Zheng X.H."/>
            <person name="Zhong F.N."/>
            <person name="Zhong W."/>
            <person name="Zhou X."/>
            <person name="Zhu S.C."/>
            <person name="Zhu X."/>
            <person name="Smith H.O."/>
            <person name="Gibbs R.A."/>
            <person name="Myers E.W."/>
            <person name="Rubin G.M."/>
            <person name="Venter J.C."/>
        </authorList>
    </citation>
    <scope>NUCLEOTIDE SEQUENCE [LARGE SCALE GENOMIC DNA]</scope>
    <source>
        <strain>Berkeley</strain>
    </source>
</reference>
<reference evidence="12" key="3">
    <citation type="journal article" date="2002" name="Genome Biol.">
        <title>Annotation of the Drosophila melanogaster euchromatic genome: a systematic review.</title>
        <authorList>
            <person name="Misra S."/>
            <person name="Crosby M.A."/>
            <person name="Mungall C.J."/>
            <person name="Matthews B.B."/>
            <person name="Campbell K.S."/>
            <person name="Hradecky P."/>
            <person name="Huang Y."/>
            <person name="Kaminker J.S."/>
            <person name="Millburn G.H."/>
            <person name="Prochnik S.E."/>
            <person name="Smith C.D."/>
            <person name="Tupy J.L."/>
            <person name="Whitfield E.J."/>
            <person name="Bayraktaroglu L."/>
            <person name="Berman B.P."/>
            <person name="Bettencourt B.R."/>
            <person name="Celniker S.E."/>
            <person name="de Grey A.D.N.J."/>
            <person name="Drysdale R.A."/>
            <person name="Harris N.L."/>
            <person name="Richter J."/>
            <person name="Russo S."/>
            <person name="Schroeder A.J."/>
            <person name="Shu S.Q."/>
            <person name="Stapleton M."/>
            <person name="Yamada C."/>
            <person name="Ashburner M."/>
            <person name="Gelbart W.M."/>
            <person name="Rubin G.M."/>
            <person name="Lewis S.E."/>
        </authorList>
    </citation>
    <scope>GENOME REANNOTATION</scope>
    <source>
        <strain>Berkeley</strain>
    </source>
</reference>
<reference evidence="12" key="4">
    <citation type="journal article" date="2002" name="Genome Biol.">
        <title>A Drosophila full-length cDNA resource.</title>
        <authorList>
            <person name="Stapleton M."/>
            <person name="Carlson J.W."/>
            <person name="Brokstein P."/>
            <person name="Yu C."/>
            <person name="Champe M."/>
            <person name="George R.A."/>
            <person name="Guarin H."/>
            <person name="Kronmiller B."/>
            <person name="Pacleb J.M."/>
            <person name="Park S."/>
            <person name="Wan K.H."/>
            <person name="Rubin G.M."/>
            <person name="Celniker S.E."/>
        </authorList>
    </citation>
    <scope>NUCLEOTIDE SEQUENCE [LARGE SCALE MRNA]</scope>
    <source>
        <strain>Berkeley</strain>
        <tissue>Embryo</tissue>
    </source>
</reference>
<reference key="5">
    <citation type="journal article" date="2002" name="Development">
        <title>Shar-pei mediates cell proliferation arrest during imaginal disc growth in Drosophila.</title>
        <authorList>
            <person name="Kango-Singh M."/>
            <person name="Nolo R."/>
            <person name="Tao C."/>
            <person name="Verstreken P."/>
            <person name="Hiesinger P.R."/>
            <person name="Bellen H.J."/>
            <person name="Halder G."/>
        </authorList>
    </citation>
    <scope>FUNCTION</scope>
</reference>
<reference key="6">
    <citation type="journal article" date="2003" name="Cell">
        <title>The Drosophila Mst ortholog, hippo, restricts growth and cell proliferation and promotes apoptosis.</title>
        <authorList>
            <person name="Harvey K.F."/>
            <person name="Pfleger C.M."/>
            <person name="Hariharan I.K."/>
        </authorList>
    </citation>
    <scope>FUNCTION WITH HPO</scope>
</reference>
<reference key="7">
    <citation type="journal article" date="2003" name="Cell">
        <title>hippo encodes a Ste-20 family protein kinase that restricts cell proliferation and promotes apoptosis in conjunction with salvador and warts.</title>
        <authorList>
            <person name="Wu S."/>
            <person name="Huang J."/>
            <person name="Dong J."/>
            <person name="Pan D."/>
        </authorList>
    </citation>
    <scope>PHOSPHORYLATION BY HPO</scope>
</reference>
<reference key="8">
    <citation type="journal article" date="2008" name="J. Proteome Res.">
        <title>Phosphoproteome analysis of Drosophila melanogaster embryos.</title>
        <authorList>
            <person name="Zhai B."/>
            <person name="Villen J."/>
            <person name="Beausoleil S.A."/>
            <person name="Mintseris J."/>
            <person name="Gygi S.P."/>
        </authorList>
    </citation>
    <scope>PHOSPHORYLATION [LARGE SCALE ANALYSIS] AT SER-413 AND SER-416</scope>
    <scope>IDENTIFICATION BY MASS SPECTROMETRY</scope>
    <source>
        <tissue>Embryo</tissue>
    </source>
</reference>
<reference key="9">
    <citation type="journal article" date="2010" name="Curr. Biol.">
        <title>Ajuba LIM proteins are negative regulators of the Hippo signaling pathway.</title>
        <authorList>
            <person name="Das Thakur M."/>
            <person name="Feng Y."/>
            <person name="Jagannathan R."/>
            <person name="Seppa M.J."/>
            <person name="Skeath J.B."/>
            <person name="Longmore G.D."/>
        </authorList>
    </citation>
    <scope>INTERACTION WITH JUB</scope>
</reference>
<reference key="10">
    <citation type="journal article" date="2010" name="Dev. Cell">
        <title>Kibra functions as a tumor suppressor protein that regulates Hippo signaling in conjunction with Merlin and Expanded.</title>
        <authorList>
            <person name="Yu J."/>
            <person name="Zheng Y."/>
            <person name="Dong J."/>
            <person name="Klusza S."/>
            <person name="Deng W.-M."/>
            <person name="Pan D."/>
        </authorList>
    </citation>
    <scope>INTERACTION WITH KIBRA; MER AND HPO</scope>
</reference>
<name>SAV_DROME</name>
<feature type="chain" id="PRO_0000076062" description="Scaffold protein salvador">
    <location>
        <begin position="1"/>
        <end position="608"/>
    </location>
</feature>
<feature type="domain" description="WW 1" evidence="2 12">
    <location>
        <begin position="423"/>
        <end position="456"/>
    </location>
</feature>
<feature type="domain" description="WW 2" evidence="2 12">
    <location>
        <begin position="458"/>
        <end position="491"/>
    </location>
</feature>
<feature type="domain" description="SARAH" evidence="3">
    <location>
        <begin position="552"/>
        <end position="599"/>
    </location>
</feature>
<feature type="region of interest" description="Disordered" evidence="4">
    <location>
        <begin position="17"/>
        <end position="37"/>
    </location>
</feature>
<feature type="region of interest" description="Disordered" evidence="4">
    <location>
        <begin position="64"/>
        <end position="145"/>
    </location>
</feature>
<feature type="region of interest" description="Disordered" evidence="4">
    <location>
        <begin position="157"/>
        <end position="202"/>
    </location>
</feature>
<feature type="region of interest" description="Disordered" evidence="4">
    <location>
        <begin position="220"/>
        <end position="243"/>
    </location>
</feature>
<feature type="region of interest" description="Disordered" evidence="4">
    <location>
        <begin position="264"/>
        <end position="293"/>
    </location>
</feature>
<feature type="region of interest" description="Disordered" evidence="4">
    <location>
        <begin position="345"/>
        <end position="425"/>
    </location>
</feature>
<feature type="coiled-coil region" evidence="1">
    <location>
        <begin position="274"/>
        <end position="294"/>
    </location>
</feature>
<feature type="short sequence motif" description="Ferm-binding motif (FBM)">
    <location>
        <begin position="32"/>
        <end position="38"/>
    </location>
</feature>
<feature type="compositionally biased region" description="Basic and acidic residues" evidence="4">
    <location>
        <begin position="22"/>
        <end position="37"/>
    </location>
</feature>
<feature type="compositionally biased region" description="Polar residues" evidence="4">
    <location>
        <begin position="64"/>
        <end position="89"/>
    </location>
</feature>
<feature type="compositionally biased region" description="Basic residues" evidence="4">
    <location>
        <begin position="108"/>
        <end position="125"/>
    </location>
</feature>
<feature type="compositionally biased region" description="Low complexity" evidence="4">
    <location>
        <begin position="160"/>
        <end position="172"/>
    </location>
</feature>
<feature type="compositionally biased region" description="Low complexity" evidence="4">
    <location>
        <begin position="229"/>
        <end position="242"/>
    </location>
</feature>
<feature type="compositionally biased region" description="Low complexity" evidence="4">
    <location>
        <begin position="275"/>
        <end position="289"/>
    </location>
</feature>
<feature type="compositionally biased region" description="Gly residues" evidence="4">
    <location>
        <begin position="358"/>
        <end position="373"/>
    </location>
</feature>
<feature type="modified residue" description="Phosphoserine" evidence="9">
    <location>
        <position position="413"/>
    </location>
</feature>
<feature type="modified residue" description="Phosphoserine" evidence="9">
    <location>
        <position position="416"/>
    </location>
</feature>
<feature type="sequence conflict" description="In Ref. 4; AAL39999." evidence="12" ref="4">
    <original>S</original>
    <variation>A</variation>
    <location>
        <position position="119"/>
    </location>
</feature>
<feature type="sequence conflict" description="In Ref. 1; AAM97280." evidence="12" ref="1">
    <original>L</original>
    <variation>M</variation>
    <location>
        <position position="194"/>
    </location>
</feature>
<feature type="sequence conflict" description="In Ref. 4; AAL39999." evidence="12" ref="4">
    <location>
        <position position="275"/>
    </location>
</feature>
<feature type="helix" evidence="15">
    <location>
        <begin position="537"/>
        <end position="544"/>
    </location>
</feature>
<feature type="helix" evidence="15">
    <location>
        <begin position="555"/>
        <end position="557"/>
    </location>
</feature>
<feature type="helix" evidence="15">
    <location>
        <begin position="560"/>
        <end position="599"/>
    </location>
</feature>
<dbReference type="EMBL" id="AY131211">
    <property type="protein sequence ID" value="AAM97280.1"/>
    <property type="molecule type" value="mRNA"/>
</dbReference>
<dbReference type="EMBL" id="AE014297">
    <property type="protein sequence ID" value="AAF56090.3"/>
    <property type="molecule type" value="Genomic_DNA"/>
</dbReference>
<dbReference type="EMBL" id="AY069854">
    <property type="protein sequence ID" value="AAL39999.1"/>
    <property type="molecule type" value="mRNA"/>
</dbReference>
<dbReference type="RefSeq" id="NP_788721.1">
    <property type="nucleotide sequence ID" value="NM_176544.3"/>
</dbReference>
<dbReference type="PDB" id="6BN1">
    <property type="method" value="X-ray"/>
    <property type="resolution" value="2.60 A"/>
    <property type="chains" value="B=531-600"/>
</dbReference>
<dbReference type="PDBsum" id="6BN1"/>
<dbReference type="SMR" id="Q9VCR6"/>
<dbReference type="BioGRID" id="76064">
    <property type="interactions" value="60"/>
</dbReference>
<dbReference type="DIP" id="DIP-18696N"/>
<dbReference type="FunCoup" id="Q9VCR6">
    <property type="interactions" value="75"/>
</dbReference>
<dbReference type="IntAct" id="Q9VCR6">
    <property type="interactions" value="4"/>
</dbReference>
<dbReference type="STRING" id="7227.FBpp0083749"/>
<dbReference type="iPTMnet" id="Q9VCR6"/>
<dbReference type="PaxDb" id="7227-FBpp0083749"/>
<dbReference type="EnsemblMetazoa" id="FBtr0084356">
    <property type="protein sequence ID" value="FBpp0083749"/>
    <property type="gene ID" value="FBgn0053193"/>
</dbReference>
<dbReference type="GeneID" id="252554"/>
<dbReference type="KEGG" id="dme:Dmel_CG33193"/>
<dbReference type="UCSC" id="CG33193-RA">
    <property type="organism name" value="d. melanogaster"/>
</dbReference>
<dbReference type="AGR" id="FB:FBgn0053193"/>
<dbReference type="CTD" id="252554"/>
<dbReference type="FlyBase" id="FBgn0053193">
    <property type="gene designation" value="sav"/>
</dbReference>
<dbReference type="VEuPathDB" id="VectorBase:FBgn0053193"/>
<dbReference type="eggNOG" id="KOG1891">
    <property type="taxonomic scope" value="Eukaryota"/>
</dbReference>
<dbReference type="InParanoid" id="Q9VCR6"/>
<dbReference type="OMA" id="VWTSDQR"/>
<dbReference type="OrthoDB" id="5339429at2759"/>
<dbReference type="PhylomeDB" id="Q9VCR6"/>
<dbReference type="Reactome" id="R-DME-2028269">
    <property type="pathway name" value="Signaling by Hippo"/>
</dbReference>
<dbReference type="Reactome" id="R-DME-390089">
    <property type="pathway name" value="Formation of the Hippo kinase cassette"/>
</dbReference>
<dbReference type="Reactome" id="R-DME-390098">
    <property type="pathway name" value="Phosphorylation-dependent inhibition of YKI"/>
</dbReference>
<dbReference type="Reactome" id="R-DME-390150">
    <property type="pathway name" value="DS ligand bound to FT receptor"/>
</dbReference>
<dbReference type="SignaLink" id="Q9VCR6"/>
<dbReference type="BioGRID-ORCS" id="252554">
    <property type="hits" value="0 hits in 1 CRISPR screen"/>
</dbReference>
<dbReference type="GenomeRNAi" id="252554"/>
<dbReference type="PRO" id="PR:Q9VCR6"/>
<dbReference type="Proteomes" id="UP000000803">
    <property type="component" value="Chromosome 3R"/>
</dbReference>
<dbReference type="Bgee" id="FBgn0053193">
    <property type="expression patterns" value="Expressed in saliva-secreting gland and 44 other cell types or tissues"/>
</dbReference>
<dbReference type="ExpressionAtlas" id="Q9VCR6">
    <property type="expression patterns" value="baseline and differential"/>
</dbReference>
<dbReference type="GO" id="GO:0045177">
    <property type="term" value="C:apical part of cell"/>
    <property type="evidence" value="ECO:0000314"/>
    <property type="project" value="FlyBase"/>
</dbReference>
<dbReference type="GO" id="GO:0106037">
    <property type="term" value="C:apicomedial cortex"/>
    <property type="evidence" value="ECO:0000314"/>
    <property type="project" value="FlyBase"/>
</dbReference>
<dbReference type="GO" id="GO:0005829">
    <property type="term" value="C:cytosol"/>
    <property type="evidence" value="ECO:0000314"/>
    <property type="project" value="FlyBase"/>
</dbReference>
<dbReference type="GO" id="GO:0060090">
    <property type="term" value="F:molecular adaptor activity"/>
    <property type="evidence" value="ECO:0000316"/>
    <property type="project" value="FlyBase"/>
</dbReference>
<dbReference type="GO" id="GO:0006915">
    <property type="term" value="P:apoptotic process"/>
    <property type="evidence" value="ECO:0007669"/>
    <property type="project" value="UniProtKB-KW"/>
</dbReference>
<dbReference type="GO" id="GO:0035329">
    <property type="term" value="P:hippo signaling"/>
    <property type="evidence" value="ECO:0000314"/>
    <property type="project" value="FlyBase"/>
</dbReference>
<dbReference type="GO" id="GO:0007444">
    <property type="term" value="P:imaginal disc development"/>
    <property type="evidence" value="ECO:0000315"/>
    <property type="project" value="FlyBase"/>
</dbReference>
<dbReference type="GO" id="GO:0072002">
    <property type="term" value="P:Malpighian tubule development"/>
    <property type="evidence" value="ECO:0000315"/>
    <property type="project" value="FlyBase"/>
</dbReference>
<dbReference type="GO" id="GO:0008285">
    <property type="term" value="P:negative regulation of cell population proliferation"/>
    <property type="evidence" value="ECO:0000315"/>
    <property type="project" value="FlyBase"/>
</dbReference>
<dbReference type="GO" id="GO:0040015">
    <property type="term" value="P:negative regulation of multicellular organism growth"/>
    <property type="evidence" value="ECO:0000315"/>
    <property type="project" value="FlyBase"/>
</dbReference>
<dbReference type="GO" id="GO:0046621">
    <property type="term" value="P:negative regulation of organ growth"/>
    <property type="evidence" value="ECO:0000304"/>
    <property type="project" value="FlyBase"/>
</dbReference>
<dbReference type="GO" id="GO:0043065">
    <property type="term" value="P:positive regulation of apoptotic process"/>
    <property type="evidence" value="ECO:0000315"/>
    <property type="project" value="FlyBase"/>
</dbReference>
<dbReference type="GO" id="GO:0045463">
    <property type="term" value="P:R8 cell development"/>
    <property type="evidence" value="ECO:0000316"/>
    <property type="project" value="FlyBase"/>
</dbReference>
<dbReference type="GO" id="GO:0045464">
    <property type="term" value="P:R8 cell fate specification"/>
    <property type="evidence" value="ECO:0000315"/>
    <property type="project" value="FlyBase"/>
</dbReference>
<dbReference type="GO" id="GO:0048814">
    <property type="term" value="P:regulation of dendrite morphogenesis"/>
    <property type="evidence" value="ECO:0000316"/>
    <property type="project" value="FlyBase"/>
</dbReference>
<dbReference type="GO" id="GO:0045570">
    <property type="term" value="P:regulation of imaginal disc growth"/>
    <property type="evidence" value="ECO:0000304"/>
    <property type="project" value="FlyBase"/>
</dbReference>
<dbReference type="GO" id="GO:0010212">
    <property type="term" value="P:response to ionizing radiation"/>
    <property type="evidence" value="ECO:0000315"/>
    <property type="project" value="FlyBase"/>
</dbReference>
<dbReference type="GO" id="GO:0046666">
    <property type="term" value="P:retinal cell programmed cell death"/>
    <property type="evidence" value="ECO:0000315"/>
    <property type="project" value="FlyBase"/>
</dbReference>
<dbReference type="GO" id="GO:0048863">
    <property type="term" value="P:stem cell differentiation"/>
    <property type="evidence" value="ECO:0000315"/>
    <property type="project" value="FlyBase"/>
</dbReference>
<dbReference type="GO" id="GO:0072089">
    <property type="term" value="P:stem cell proliferation"/>
    <property type="evidence" value="ECO:0000315"/>
    <property type="project" value="FlyBase"/>
</dbReference>
<dbReference type="CDD" id="cd21433">
    <property type="entry name" value="SARAH_Sav"/>
    <property type="match status" value="1"/>
</dbReference>
<dbReference type="CDD" id="cd00201">
    <property type="entry name" value="WW"/>
    <property type="match status" value="1"/>
</dbReference>
<dbReference type="FunFam" id="2.20.70.10:FF:000035">
    <property type="entry name" value="Salvador homolog 1 (Drosophila)"/>
    <property type="match status" value="1"/>
</dbReference>
<dbReference type="Gene3D" id="2.20.70.10">
    <property type="match status" value="1"/>
</dbReference>
<dbReference type="InterPro" id="IPR011524">
    <property type="entry name" value="SARAH_dom"/>
</dbReference>
<dbReference type="InterPro" id="IPR030030">
    <property type="entry name" value="Sav"/>
</dbReference>
<dbReference type="InterPro" id="IPR001202">
    <property type="entry name" value="WW_dom"/>
</dbReference>
<dbReference type="InterPro" id="IPR036020">
    <property type="entry name" value="WW_dom_sf"/>
</dbReference>
<dbReference type="PANTHER" id="PTHR47522:SF2">
    <property type="entry name" value="PROTEIN SALVADOR HOMOLOG 1"/>
    <property type="match status" value="1"/>
</dbReference>
<dbReference type="PANTHER" id="PTHR47522">
    <property type="entry name" value="SALVADOR FAMILY WW DOMAIN-CONTAINING PROTEIN 1"/>
    <property type="match status" value="1"/>
</dbReference>
<dbReference type="Pfam" id="PF00397">
    <property type="entry name" value="WW"/>
    <property type="match status" value="1"/>
</dbReference>
<dbReference type="SMART" id="SM00456">
    <property type="entry name" value="WW"/>
    <property type="match status" value="2"/>
</dbReference>
<dbReference type="SUPFAM" id="SSF51045">
    <property type="entry name" value="WW domain"/>
    <property type="match status" value="2"/>
</dbReference>
<dbReference type="PROSITE" id="PS50951">
    <property type="entry name" value="SARAH"/>
    <property type="match status" value="1"/>
</dbReference>
<dbReference type="PROSITE" id="PS50020">
    <property type="entry name" value="WW_DOMAIN_2"/>
    <property type="match status" value="2"/>
</dbReference>
<comment type="function">
    <text evidence="5 6 8">Plays a key role in the Hippo/SWH (Sav/Wts/Hpo) signaling pathway, a signaling pathway that plays a pivotal role in organ size control and tumor suppression by restricting proliferation and promoting apoptosis. The core of this pathway is composed of a kinase cascade wherein Hippo (Hpo), in complex with its regulatory protein Salvador (Sav), phosphorylates and activates Warts (Wts) in complex with its regulatory protein Mats, which in turn phosphorylates and inactivates the Yorkie (Yki) oncoprotein. The Hippo/SWH signaling pathway inhibits the activity of the transcriptional complex formed by Scalloped (sd) and Yki and the target genes of this pathway include cyclin-E (cycE), diap1 and bantam. Required for cell cycle exit in eye imaginal disk and hid-induced apoptotic cell deaths that are part of normal retinal development. Activation of Drice in eye imaginal disk by either Hid or Rpr is almost completely blocked by Sav expression.</text>
</comment>
<comment type="subunit">
    <text evidence="5 10 11">Interacts with Wts via its WW domains. Interacts (via FBM motif) with Mer (via FERM domain). Interacts with Kibra. Interacts with Hpo (via SARAH domain). Interacts with jub.</text>
</comment>
<comment type="interaction">
    <interactant intactId="EBI-145004">
        <id>Q9VCR6</id>
    </interactant>
    <interactant intactId="EBI-101858">
        <id>Q8T0S6</id>
        <label>hpo</label>
    </interactant>
    <organismsDiffer>false</organismsDiffer>
    <experiments>3</experiments>
</comment>
<comment type="interaction">
    <interactant intactId="EBI-145004">
        <id>Q9VCR6</id>
    </interactant>
    <interactant intactId="EBI-3415099">
        <id>Q6NPA6</id>
        <label>par-1</label>
    </interactant>
    <organismsDiffer>false</organismsDiffer>
    <experiments>2</experiments>
</comment>
<comment type="tissue specificity">
    <text evidence="5">Third instar larvae eye disk, expressed in a stripe in the morphogenetic furrow, decreases in the region of the second mitotic wave (SMW) and increases once again posterior to the SMW.</text>
</comment>
<comment type="PTM">
    <text evidence="7 9">Phosphorylated by Hpo.</text>
</comment>